<dbReference type="EMBL" id="AY355171">
    <property type="protein sequence ID" value="AAR14165.1"/>
    <property type="molecule type" value="mRNA"/>
</dbReference>
<dbReference type="SMR" id="Q2YHJ9"/>
<dbReference type="GO" id="GO:0005576">
    <property type="term" value="C:extracellular region"/>
    <property type="evidence" value="ECO:0007669"/>
    <property type="project" value="UniProtKB-SubCell"/>
</dbReference>
<dbReference type="GO" id="GO:0005509">
    <property type="term" value="F:calcium ion binding"/>
    <property type="evidence" value="ECO:0007669"/>
    <property type="project" value="InterPro"/>
</dbReference>
<dbReference type="GO" id="GO:0047498">
    <property type="term" value="F:calcium-dependent phospholipase A2 activity"/>
    <property type="evidence" value="ECO:0007669"/>
    <property type="project" value="TreeGrafter"/>
</dbReference>
<dbReference type="GO" id="GO:0005543">
    <property type="term" value="F:phospholipid binding"/>
    <property type="evidence" value="ECO:0007669"/>
    <property type="project" value="TreeGrafter"/>
</dbReference>
<dbReference type="GO" id="GO:0090729">
    <property type="term" value="F:toxin activity"/>
    <property type="evidence" value="ECO:0007669"/>
    <property type="project" value="UniProtKB-KW"/>
</dbReference>
<dbReference type="GO" id="GO:0050482">
    <property type="term" value="P:arachidonate secretion"/>
    <property type="evidence" value="ECO:0007669"/>
    <property type="project" value="InterPro"/>
</dbReference>
<dbReference type="GO" id="GO:0016042">
    <property type="term" value="P:lipid catabolic process"/>
    <property type="evidence" value="ECO:0007669"/>
    <property type="project" value="InterPro"/>
</dbReference>
<dbReference type="GO" id="GO:0006644">
    <property type="term" value="P:phospholipid metabolic process"/>
    <property type="evidence" value="ECO:0007669"/>
    <property type="project" value="InterPro"/>
</dbReference>
<dbReference type="CDD" id="cd00125">
    <property type="entry name" value="PLA2c"/>
    <property type="match status" value="1"/>
</dbReference>
<dbReference type="FunFam" id="1.20.90.10:FF:000001">
    <property type="entry name" value="Basic phospholipase A2 homolog"/>
    <property type="match status" value="1"/>
</dbReference>
<dbReference type="Gene3D" id="1.20.90.10">
    <property type="entry name" value="Phospholipase A2 domain"/>
    <property type="match status" value="1"/>
</dbReference>
<dbReference type="InterPro" id="IPR001211">
    <property type="entry name" value="PLipase_A2"/>
</dbReference>
<dbReference type="InterPro" id="IPR033112">
    <property type="entry name" value="PLipase_A2_Asp_AS"/>
</dbReference>
<dbReference type="InterPro" id="IPR016090">
    <property type="entry name" value="PLipase_A2_dom"/>
</dbReference>
<dbReference type="InterPro" id="IPR036444">
    <property type="entry name" value="PLipase_A2_dom_sf"/>
</dbReference>
<dbReference type="InterPro" id="IPR033113">
    <property type="entry name" value="PLipase_A2_His_AS"/>
</dbReference>
<dbReference type="PANTHER" id="PTHR11716:SF101">
    <property type="entry name" value="BASIC PHOSPHOLIPASE A2 PA-11-LIKE"/>
    <property type="match status" value="1"/>
</dbReference>
<dbReference type="PANTHER" id="PTHR11716">
    <property type="entry name" value="PHOSPHOLIPASE A2 FAMILY MEMBER"/>
    <property type="match status" value="1"/>
</dbReference>
<dbReference type="Pfam" id="PF00068">
    <property type="entry name" value="Phospholip_A2_1"/>
    <property type="match status" value="1"/>
</dbReference>
<dbReference type="PRINTS" id="PR00389">
    <property type="entry name" value="PHPHLIPASEA2"/>
</dbReference>
<dbReference type="SMART" id="SM00085">
    <property type="entry name" value="PA2c"/>
    <property type="match status" value="1"/>
</dbReference>
<dbReference type="SUPFAM" id="SSF48619">
    <property type="entry name" value="Phospholipase A2, PLA2"/>
    <property type="match status" value="1"/>
</dbReference>
<dbReference type="PROSITE" id="PS00119">
    <property type="entry name" value="PA2_ASP"/>
    <property type="match status" value="1"/>
</dbReference>
<dbReference type="PROSITE" id="PS00118">
    <property type="entry name" value="PA2_HIS"/>
    <property type="match status" value="1"/>
</dbReference>
<keyword id="KW-0903">Direct protein sequencing</keyword>
<keyword id="KW-1015">Disulfide bond</keyword>
<keyword id="KW-1199">Hemostasis impairing toxin</keyword>
<keyword id="KW-0959">Myotoxin</keyword>
<keyword id="KW-0964">Secreted</keyword>
<keyword id="KW-0732">Signal</keyword>
<keyword id="KW-0800">Toxin</keyword>
<reference key="1">
    <citation type="journal article" date="2005" name="FEBS J.">
        <title>Unusual venom phospholipases A2 of two primitive tree vipers Trimeresurus puniceus and Trimeresurus borneensis.</title>
        <authorList>
            <person name="Wang Y.-M."/>
            <person name="Peng H.-F."/>
            <person name="Tsai I.-H."/>
        </authorList>
    </citation>
    <scope>NUCLEOTIDE SEQUENCE [MRNA]</scope>
    <scope>PROTEIN SEQUENCE OF 17-39</scope>
    <scope>FUNCTION</scope>
    <scope>SUBUNIT</scope>
    <scope>MASS SPECTROMETRY</scope>
    <scope>SUBCELLULAR LOCATION</scope>
    <source>
        <tissue>Venom</tissue>
        <tissue>Venom gland</tissue>
    </source>
</reference>
<feature type="signal peptide" evidence="4">
    <location>
        <begin position="1"/>
        <end position="16"/>
    </location>
</feature>
<feature type="chain" id="PRO_0000419062" description="Basic phospholipase A2 homolog Tpu-K49a">
    <location>
        <begin position="17"/>
        <end position="138"/>
    </location>
</feature>
<feature type="region of interest" description="Important for membrane-damaging activities in eukaryotes and bacteria; heparin-binding" evidence="2">
    <location>
        <begin position="121"/>
        <end position="133"/>
    </location>
</feature>
<feature type="site" description="Important residue of the cationic membrane-docking site (MDoS)" evidence="1">
    <location>
        <position position="121"/>
    </location>
</feature>
<feature type="site" description="Important residue of the cationic membrane-docking site (MDoS)" evidence="1">
    <location>
        <position position="124"/>
    </location>
</feature>
<feature type="site" description="Cationic membrane-docking site (MDoS)" evidence="1">
    <location>
        <position position="128"/>
    </location>
</feature>
<feature type="site" description="Hydrophobic membrane-disruption site (MDiS)" evidence="1">
    <location>
        <position position="130"/>
    </location>
</feature>
<feature type="site" description="Cationic membrane-docking site (MDoS)" evidence="1">
    <location>
        <position position="133"/>
    </location>
</feature>
<feature type="disulfide bond" evidence="3">
    <location>
        <begin position="42"/>
        <end position="131"/>
    </location>
</feature>
<feature type="disulfide bond" evidence="3">
    <location>
        <begin position="44"/>
        <end position="60"/>
    </location>
</feature>
<feature type="disulfide bond" evidence="3">
    <location>
        <begin position="59"/>
        <end position="111"/>
    </location>
</feature>
<feature type="disulfide bond" evidence="3">
    <location>
        <begin position="65"/>
        <end position="138"/>
    </location>
</feature>
<feature type="disulfide bond" evidence="3">
    <location>
        <begin position="66"/>
        <end position="104"/>
    </location>
</feature>
<feature type="disulfide bond" evidence="3">
    <location>
        <begin position="91"/>
        <end position="102"/>
    </location>
</feature>
<proteinExistence type="evidence at protein level"/>
<comment type="function">
    <text evidence="1 4">Snake venom phospholipase A2 homolog that lacks catalytic activity (PubMed:15955061). Induces local edema a few hours after injection in the hind foot (PubMed:15955061). Is myotoxic (By similarity). A model of myotoxic mechanism has been proposed: an apo Lys49-PLA2 is activated by the entrance of a hydrophobic molecule (e.g. fatty acid) at the hydrophobic channel of the protein leading to a reorientation of a monomer (By similarity). This reorientation causes a transition between 'inactive' to 'active' states, causing alignment of C-terminal and membrane-docking sites (MDoS) side-by-side and putting the membrane-disruption sites (MDiS) in the same plane, exposed to solvent and in a symmetric position for both monomers (By similarity). The MDoS region stabilizes the toxin on membrane by the interaction of charged residues with phospholipid head groups (By similarity). Subsequently, the MDiS region destabilizes the membrane with penetration of hydrophobic residues (By similarity). This insertion causes a disorganization of the membrane, allowing an uncontrolled influx of ions (i.e. calcium and sodium), and eventually triggering irreversible intracellular alterations and cell death (By similarity).</text>
</comment>
<comment type="subunit">
    <text evidence="4">Monomer.</text>
</comment>
<comment type="subcellular location">
    <subcellularLocation>
        <location evidence="4">Secreted</location>
    </subcellularLocation>
</comment>
<comment type="tissue specificity">
    <text evidence="7">Expressed by the venom gland.</text>
</comment>
<comment type="mass spectrometry" mass="14221.5" method="Electrospray" evidence="4"/>
<comment type="similarity">
    <text evidence="6">Belongs to the phospholipase A2 family. Group II subfamily. K49 sub-subfamily.</text>
</comment>
<comment type="caution">
    <text evidence="6">Does not bind calcium as one of the calcium-binding sites is lost (Asp-&gt;Lys in position 64, which corresponds to 'Lys-49' in the current nomenclature).</text>
</comment>
<accession>Q2YHJ9</accession>
<name>PA2HA_CRAPU</name>
<evidence type="ECO:0000250" key="1">
    <source>
        <dbReference type="UniProtKB" id="I6L8L6"/>
    </source>
</evidence>
<evidence type="ECO:0000250" key="2">
    <source>
        <dbReference type="UniProtKB" id="P24605"/>
    </source>
</evidence>
<evidence type="ECO:0000250" key="3">
    <source>
        <dbReference type="UniProtKB" id="Q90249"/>
    </source>
</evidence>
<evidence type="ECO:0000269" key="4">
    <source>
    </source>
</evidence>
<evidence type="ECO:0000303" key="5">
    <source>
    </source>
</evidence>
<evidence type="ECO:0000305" key="6"/>
<evidence type="ECO:0000305" key="7">
    <source>
    </source>
</evidence>
<organism>
    <name type="scientific">Craspedocephalus puniceus</name>
    <name type="common">Flat-nosed pitviper</name>
    <name type="synonym">Trimeresurus puniceus</name>
    <dbReference type="NCBI Taxonomy" id="3147916"/>
    <lineage>
        <taxon>Eukaryota</taxon>
        <taxon>Metazoa</taxon>
        <taxon>Chordata</taxon>
        <taxon>Craniata</taxon>
        <taxon>Vertebrata</taxon>
        <taxon>Euteleostomi</taxon>
        <taxon>Lepidosauria</taxon>
        <taxon>Squamata</taxon>
        <taxon>Bifurcata</taxon>
        <taxon>Unidentata</taxon>
        <taxon>Episquamata</taxon>
        <taxon>Toxicofera</taxon>
        <taxon>Serpentes</taxon>
        <taxon>Colubroidea</taxon>
        <taxon>Viperidae</taxon>
        <taxon>Crotalinae</taxon>
        <taxon>Craspedocephalus</taxon>
    </lineage>
</organism>
<protein>
    <recommendedName>
        <fullName evidence="5">Basic phospholipase A2 homolog Tpu-K49a</fullName>
        <shortName>svPLA2 homolog</shortName>
    </recommendedName>
</protein>
<sequence length="138" mass="16008">MRTLWIMAVLLVGVEGSVIQLGKMILQETGKNPVKYYGAYGCNCGPLGRRKPLDATDRCCYMHKCCYKKLTDSNPIKDRYSYSWENKAIVCKEKNPRLKEMCECDKAVAICFRENMRTYNKKERINTKIFCKKTPEPC</sequence>